<comment type="function">
    <text evidence="1">Catalyzes the oxidation of 5,10-methylenetetrahydrofolate to 5,10-methenyltetrahydrofolate and then the hydrolysis of 5,10-methenyltetrahydrofolate to 10-formyltetrahydrofolate.</text>
</comment>
<comment type="catalytic activity">
    <reaction evidence="1">
        <text>(6R)-5,10-methylene-5,6,7,8-tetrahydrofolate + NADP(+) = (6R)-5,10-methenyltetrahydrofolate + NADPH</text>
        <dbReference type="Rhea" id="RHEA:22812"/>
        <dbReference type="ChEBI" id="CHEBI:15636"/>
        <dbReference type="ChEBI" id="CHEBI:57455"/>
        <dbReference type="ChEBI" id="CHEBI:57783"/>
        <dbReference type="ChEBI" id="CHEBI:58349"/>
        <dbReference type="EC" id="1.5.1.5"/>
    </reaction>
</comment>
<comment type="catalytic activity">
    <reaction evidence="1">
        <text>(6R)-5,10-methenyltetrahydrofolate + H2O = (6R)-10-formyltetrahydrofolate + H(+)</text>
        <dbReference type="Rhea" id="RHEA:23700"/>
        <dbReference type="ChEBI" id="CHEBI:15377"/>
        <dbReference type="ChEBI" id="CHEBI:15378"/>
        <dbReference type="ChEBI" id="CHEBI:57455"/>
        <dbReference type="ChEBI" id="CHEBI:195366"/>
        <dbReference type="EC" id="3.5.4.9"/>
    </reaction>
</comment>
<comment type="pathway">
    <text evidence="1">One-carbon metabolism; tetrahydrofolate interconversion.</text>
</comment>
<comment type="subunit">
    <text evidence="1">Homodimer.</text>
</comment>
<comment type="similarity">
    <text evidence="1">Belongs to the tetrahydrofolate dehydrogenase/cyclohydrolase family.</text>
</comment>
<dbReference type="EC" id="1.5.1.5" evidence="1"/>
<dbReference type="EC" id="3.5.4.9" evidence="1"/>
<dbReference type="EMBL" id="AM408590">
    <property type="protein sequence ID" value="CAL73417.1"/>
    <property type="molecule type" value="Genomic_DNA"/>
</dbReference>
<dbReference type="RefSeq" id="WP_010950877.1">
    <property type="nucleotide sequence ID" value="NC_008769.1"/>
</dbReference>
<dbReference type="SMR" id="A1KP49"/>
<dbReference type="KEGG" id="mbb:BCG_3428c"/>
<dbReference type="HOGENOM" id="CLU_034045_3_0_11"/>
<dbReference type="UniPathway" id="UPA00193"/>
<dbReference type="Proteomes" id="UP000001472">
    <property type="component" value="Chromosome"/>
</dbReference>
<dbReference type="GO" id="GO:0005829">
    <property type="term" value="C:cytosol"/>
    <property type="evidence" value="ECO:0007669"/>
    <property type="project" value="TreeGrafter"/>
</dbReference>
<dbReference type="GO" id="GO:0004477">
    <property type="term" value="F:methenyltetrahydrofolate cyclohydrolase activity"/>
    <property type="evidence" value="ECO:0007669"/>
    <property type="project" value="UniProtKB-UniRule"/>
</dbReference>
<dbReference type="GO" id="GO:0004488">
    <property type="term" value="F:methylenetetrahydrofolate dehydrogenase (NADP+) activity"/>
    <property type="evidence" value="ECO:0007669"/>
    <property type="project" value="UniProtKB-UniRule"/>
</dbReference>
<dbReference type="GO" id="GO:0000105">
    <property type="term" value="P:L-histidine biosynthetic process"/>
    <property type="evidence" value="ECO:0007669"/>
    <property type="project" value="UniProtKB-KW"/>
</dbReference>
<dbReference type="GO" id="GO:0009086">
    <property type="term" value="P:methionine biosynthetic process"/>
    <property type="evidence" value="ECO:0007669"/>
    <property type="project" value="UniProtKB-KW"/>
</dbReference>
<dbReference type="GO" id="GO:0006164">
    <property type="term" value="P:purine nucleotide biosynthetic process"/>
    <property type="evidence" value="ECO:0007669"/>
    <property type="project" value="UniProtKB-KW"/>
</dbReference>
<dbReference type="GO" id="GO:0035999">
    <property type="term" value="P:tetrahydrofolate interconversion"/>
    <property type="evidence" value="ECO:0007669"/>
    <property type="project" value="UniProtKB-UniRule"/>
</dbReference>
<dbReference type="CDD" id="cd01080">
    <property type="entry name" value="NAD_bind_m-THF_DH_Cyclohyd"/>
    <property type="match status" value="1"/>
</dbReference>
<dbReference type="FunFam" id="3.40.50.720:FF:000094">
    <property type="entry name" value="Bifunctional protein FolD"/>
    <property type="match status" value="1"/>
</dbReference>
<dbReference type="FunFam" id="3.40.50.10860:FF:000005">
    <property type="entry name" value="C-1-tetrahydrofolate synthase, cytoplasmic, putative"/>
    <property type="match status" value="1"/>
</dbReference>
<dbReference type="Gene3D" id="3.40.50.10860">
    <property type="entry name" value="Leucine Dehydrogenase, chain A, domain 1"/>
    <property type="match status" value="1"/>
</dbReference>
<dbReference type="Gene3D" id="3.40.50.720">
    <property type="entry name" value="NAD(P)-binding Rossmann-like Domain"/>
    <property type="match status" value="1"/>
</dbReference>
<dbReference type="HAMAP" id="MF_01576">
    <property type="entry name" value="THF_DHG_CYH"/>
    <property type="match status" value="1"/>
</dbReference>
<dbReference type="InterPro" id="IPR046346">
    <property type="entry name" value="Aminoacid_DH-like_N_sf"/>
</dbReference>
<dbReference type="InterPro" id="IPR036291">
    <property type="entry name" value="NAD(P)-bd_dom_sf"/>
</dbReference>
<dbReference type="InterPro" id="IPR000672">
    <property type="entry name" value="THF_DH/CycHdrlase"/>
</dbReference>
<dbReference type="InterPro" id="IPR020630">
    <property type="entry name" value="THF_DH/CycHdrlase_cat_dom"/>
</dbReference>
<dbReference type="InterPro" id="IPR020631">
    <property type="entry name" value="THF_DH/CycHdrlase_NAD-bd_dom"/>
</dbReference>
<dbReference type="NCBIfam" id="NF010789">
    <property type="entry name" value="PRK14193.1"/>
    <property type="match status" value="1"/>
</dbReference>
<dbReference type="PANTHER" id="PTHR48099:SF5">
    <property type="entry name" value="C-1-TETRAHYDROFOLATE SYNTHASE, CYTOPLASMIC"/>
    <property type="match status" value="1"/>
</dbReference>
<dbReference type="PANTHER" id="PTHR48099">
    <property type="entry name" value="C-1-TETRAHYDROFOLATE SYNTHASE, CYTOPLASMIC-RELATED"/>
    <property type="match status" value="1"/>
</dbReference>
<dbReference type="Pfam" id="PF00763">
    <property type="entry name" value="THF_DHG_CYH"/>
    <property type="match status" value="1"/>
</dbReference>
<dbReference type="Pfam" id="PF02882">
    <property type="entry name" value="THF_DHG_CYH_C"/>
    <property type="match status" value="1"/>
</dbReference>
<dbReference type="PRINTS" id="PR00085">
    <property type="entry name" value="THFDHDRGNASE"/>
</dbReference>
<dbReference type="SUPFAM" id="SSF53223">
    <property type="entry name" value="Aminoacid dehydrogenase-like, N-terminal domain"/>
    <property type="match status" value="1"/>
</dbReference>
<dbReference type="SUPFAM" id="SSF51735">
    <property type="entry name" value="NAD(P)-binding Rossmann-fold domains"/>
    <property type="match status" value="1"/>
</dbReference>
<name>FOLD_MYCBP</name>
<organism>
    <name type="scientific">Mycobacterium bovis (strain BCG / Pasteur 1173P2)</name>
    <dbReference type="NCBI Taxonomy" id="410289"/>
    <lineage>
        <taxon>Bacteria</taxon>
        <taxon>Bacillati</taxon>
        <taxon>Actinomycetota</taxon>
        <taxon>Actinomycetes</taxon>
        <taxon>Mycobacteriales</taxon>
        <taxon>Mycobacteriaceae</taxon>
        <taxon>Mycobacterium</taxon>
        <taxon>Mycobacterium tuberculosis complex</taxon>
    </lineage>
</organism>
<reference key="1">
    <citation type="journal article" date="2007" name="Proc. Natl. Acad. Sci. U.S.A.">
        <title>Genome plasticity of BCG and impact on vaccine efficacy.</title>
        <authorList>
            <person name="Brosch R."/>
            <person name="Gordon S.V."/>
            <person name="Garnier T."/>
            <person name="Eiglmeier K."/>
            <person name="Frigui W."/>
            <person name="Valenti P."/>
            <person name="Dos Santos S."/>
            <person name="Duthoy S."/>
            <person name="Lacroix C."/>
            <person name="Garcia-Pelayo C."/>
            <person name="Inwald J.K."/>
            <person name="Golby P."/>
            <person name="Garcia J.N."/>
            <person name="Hewinson R.G."/>
            <person name="Behr M.A."/>
            <person name="Quail M.A."/>
            <person name="Churcher C."/>
            <person name="Barrell B.G."/>
            <person name="Parkhill J."/>
            <person name="Cole S.T."/>
        </authorList>
    </citation>
    <scope>NUCLEOTIDE SEQUENCE [LARGE SCALE GENOMIC DNA]</scope>
    <source>
        <strain>BCG / Pasteur 1173P2</strain>
    </source>
</reference>
<gene>
    <name evidence="1" type="primary">folD</name>
    <name type="ordered locus">BCG_3428c</name>
</gene>
<protein>
    <recommendedName>
        <fullName evidence="1">Bifunctional protein FolD</fullName>
    </recommendedName>
    <domain>
        <recommendedName>
            <fullName evidence="1">Methylenetetrahydrofolate dehydrogenase</fullName>
            <ecNumber evidence="1">1.5.1.5</ecNumber>
        </recommendedName>
    </domain>
    <domain>
        <recommendedName>
            <fullName evidence="1">Methenyltetrahydrofolate cyclohydrolase</fullName>
            <ecNumber evidence="1">3.5.4.9</ecNumber>
        </recommendedName>
    </domain>
</protein>
<sequence>MGAIMLDGKATRDEIFGDLKPRVAALDAAGRTPGLGTILVGDDPGSQAYVRGKHADCAKVGITSIRRDLPADISTATLNETIDELNANPDCTGYIVQLPLPKHLDENAALERVDPAKDADGLHPTNLGRLVLGTPAPLPCTPRGIVHLLRRYDISIAGAHVVVIGRGVTVGRPLGLLLTRRSENATVTLCHTGTRDLPALTRQADIVVAAVGVAHLLTADMVRPGAAVIDVGVSRTDDGLVGDVHPDVWELAGHVSPNPGGVGPLTRAFLLTNVVELAERR</sequence>
<evidence type="ECO:0000255" key="1">
    <source>
        <dbReference type="HAMAP-Rule" id="MF_01576"/>
    </source>
</evidence>
<feature type="chain" id="PRO_0000305843" description="Bifunctional protein FolD">
    <location>
        <begin position="1"/>
        <end position="281"/>
    </location>
</feature>
<feature type="binding site" evidence="1">
    <location>
        <begin position="165"/>
        <end position="167"/>
    </location>
    <ligand>
        <name>NADP(+)</name>
        <dbReference type="ChEBI" id="CHEBI:58349"/>
    </ligand>
</feature>
<feature type="binding site" evidence="1">
    <location>
        <position position="192"/>
    </location>
    <ligand>
        <name>NADP(+)</name>
        <dbReference type="ChEBI" id="CHEBI:58349"/>
    </ligand>
</feature>
<feature type="binding site" evidence="1">
    <location>
        <position position="233"/>
    </location>
    <ligand>
        <name>NADP(+)</name>
        <dbReference type="ChEBI" id="CHEBI:58349"/>
    </ligand>
</feature>
<accession>A1KP49</accession>
<proteinExistence type="inferred from homology"/>
<keyword id="KW-0028">Amino-acid biosynthesis</keyword>
<keyword id="KW-0368">Histidine biosynthesis</keyword>
<keyword id="KW-0378">Hydrolase</keyword>
<keyword id="KW-0486">Methionine biosynthesis</keyword>
<keyword id="KW-0511">Multifunctional enzyme</keyword>
<keyword id="KW-0521">NADP</keyword>
<keyword id="KW-0554">One-carbon metabolism</keyword>
<keyword id="KW-0560">Oxidoreductase</keyword>
<keyword id="KW-0658">Purine biosynthesis</keyword>